<sequence>MEGPEIQFAEATIDNGRFGTRTVRFETGRLAKQAAGAVLATLDEDTVVLSTTAAGKHPKEQFDFFPLTVDVEERQYAAGKIPGSFFRREGRPSTEAILACRLIDRPLRPLFVKGLRNEVQVVETILAIHPDDSYDVLAINAASASTQISGLPFSGPVGGVRVALIDGTWVGFPRYSEKERAVFDMVVAGRVVGDDVAITMVEAEATDNAWELIKGEGAGAPTEEVVAEGLEAAKPFIRALCEAQAALASRAAKEVQVFPVFPEYEPDAYDAVEQQVADHLDAALRIADKQERESRLDEIKDAAVGALQAGFDGREKELSAAYRALTKKFIRRHILTDSFRIDGRGLKDIRPLTAEVEVLPRVHGSALFERGETQILGVTTLNMLKMEQQLDTLSPVSRKRYMHNYNFPPYSTGETGRVGSPKRREIGHGALAERALVPVLPARDEFPYAIRQVSEALSSNGSTSMGSVCASTLSMLNAGVPLRAPVAGIAMGLVSDEVDGETRYATLTDILGAEDAFGDMDFKVAGTREFVTAIQLDTKLDGIPASVLAGALSQAREARLHILDVMAEAIDTPDEMAATAPRVITVQVPVDKIGEVIGPKGKMINQIQDDTGADISIEDDGTVFIGATDGPSAEAARQAINAIANPHMPEVGERFVGTVVKTTSFGAFVSLTPGKDGLLHISQIRRLVGGKRVENVEDVLGVGQKVQVEIAEIDPRGKLSLHAVVEETPADDAPAEASTATADA</sequence>
<name>PNP_BEUC1</name>
<gene>
    <name evidence="1" type="primary">pnp</name>
    <name type="ordered locus">Bcav_2478</name>
</gene>
<protein>
    <recommendedName>
        <fullName evidence="1">Polyribonucleotide nucleotidyltransferase</fullName>
        <ecNumber evidence="1">2.7.7.8</ecNumber>
    </recommendedName>
    <alternativeName>
        <fullName evidence="1">Polynucleotide phosphorylase</fullName>
        <shortName evidence="1">PNPase</shortName>
    </alternativeName>
</protein>
<keyword id="KW-0963">Cytoplasm</keyword>
<keyword id="KW-0460">Magnesium</keyword>
<keyword id="KW-0479">Metal-binding</keyword>
<keyword id="KW-0548">Nucleotidyltransferase</keyword>
<keyword id="KW-1185">Reference proteome</keyword>
<keyword id="KW-0694">RNA-binding</keyword>
<keyword id="KW-0808">Transferase</keyword>
<dbReference type="EC" id="2.7.7.8" evidence="1"/>
<dbReference type="EMBL" id="CP001618">
    <property type="protein sequence ID" value="ACQ80728.1"/>
    <property type="molecule type" value="Genomic_DNA"/>
</dbReference>
<dbReference type="RefSeq" id="WP_015882968.1">
    <property type="nucleotide sequence ID" value="NC_012669.1"/>
</dbReference>
<dbReference type="SMR" id="C5BWR2"/>
<dbReference type="STRING" id="471853.Bcav_2478"/>
<dbReference type="KEGG" id="bcv:Bcav_2478"/>
<dbReference type="eggNOG" id="COG1185">
    <property type="taxonomic scope" value="Bacteria"/>
</dbReference>
<dbReference type="HOGENOM" id="CLU_004217_2_2_11"/>
<dbReference type="OrthoDB" id="9804305at2"/>
<dbReference type="Proteomes" id="UP000007962">
    <property type="component" value="Chromosome"/>
</dbReference>
<dbReference type="GO" id="GO:0005829">
    <property type="term" value="C:cytosol"/>
    <property type="evidence" value="ECO:0007669"/>
    <property type="project" value="TreeGrafter"/>
</dbReference>
<dbReference type="GO" id="GO:0000175">
    <property type="term" value="F:3'-5'-RNA exonuclease activity"/>
    <property type="evidence" value="ECO:0007669"/>
    <property type="project" value="TreeGrafter"/>
</dbReference>
<dbReference type="GO" id="GO:0000287">
    <property type="term" value="F:magnesium ion binding"/>
    <property type="evidence" value="ECO:0007669"/>
    <property type="project" value="UniProtKB-UniRule"/>
</dbReference>
<dbReference type="GO" id="GO:0004654">
    <property type="term" value="F:polyribonucleotide nucleotidyltransferase activity"/>
    <property type="evidence" value="ECO:0007669"/>
    <property type="project" value="UniProtKB-UniRule"/>
</dbReference>
<dbReference type="GO" id="GO:0003723">
    <property type="term" value="F:RNA binding"/>
    <property type="evidence" value="ECO:0007669"/>
    <property type="project" value="UniProtKB-UniRule"/>
</dbReference>
<dbReference type="GO" id="GO:0006402">
    <property type="term" value="P:mRNA catabolic process"/>
    <property type="evidence" value="ECO:0007669"/>
    <property type="project" value="UniProtKB-UniRule"/>
</dbReference>
<dbReference type="GO" id="GO:0006396">
    <property type="term" value="P:RNA processing"/>
    <property type="evidence" value="ECO:0007669"/>
    <property type="project" value="InterPro"/>
</dbReference>
<dbReference type="CDD" id="cd02393">
    <property type="entry name" value="KH-I_PNPase"/>
    <property type="match status" value="1"/>
</dbReference>
<dbReference type="CDD" id="cd11364">
    <property type="entry name" value="RNase_PH_PNPase_2"/>
    <property type="match status" value="1"/>
</dbReference>
<dbReference type="CDD" id="cd04472">
    <property type="entry name" value="S1_PNPase"/>
    <property type="match status" value="1"/>
</dbReference>
<dbReference type="FunFam" id="2.40.50.140:FF:000069">
    <property type="entry name" value="Polyribonucleotide nucleotidyltransferase"/>
    <property type="match status" value="1"/>
</dbReference>
<dbReference type="FunFam" id="3.30.1370.10:FF:000001">
    <property type="entry name" value="Polyribonucleotide nucleotidyltransferase"/>
    <property type="match status" value="1"/>
</dbReference>
<dbReference type="FunFam" id="3.30.230.70:FF:000001">
    <property type="entry name" value="Polyribonucleotide nucleotidyltransferase"/>
    <property type="match status" value="1"/>
</dbReference>
<dbReference type="FunFam" id="3.30.230.70:FF:000002">
    <property type="entry name" value="Polyribonucleotide nucleotidyltransferase"/>
    <property type="match status" value="1"/>
</dbReference>
<dbReference type="Gene3D" id="3.30.230.70">
    <property type="entry name" value="GHMP Kinase, N-terminal domain"/>
    <property type="match status" value="2"/>
</dbReference>
<dbReference type="Gene3D" id="3.30.1370.10">
    <property type="entry name" value="K Homology domain, type 1"/>
    <property type="match status" value="1"/>
</dbReference>
<dbReference type="Gene3D" id="2.40.50.140">
    <property type="entry name" value="Nucleic acid-binding proteins"/>
    <property type="match status" value="1"/>
</dbReference>
<dbReference type="HAMAP" id="MF_01595">
    <property type="entry name" value="PNPase"/>
    <property type="match status" value="1"/>
</dbReference>
<dbReference type="InterPro" id="IPR001247">
    <property type="entry name" value="ExoRNase_PH_dom1"/>
</dbReference>
<dbReference type="InterPro" id="IPR036345">
    <property type="entry name" value="ExoRNase_PH_dom2_sf"/>
</dbReference>
<dbReference type="InterPro" id="IPR014069">
    <property type="entry name" value="GPSI/PNP"/>
</dbReference>
<dbReference type="InterPro" id="IPR004087">
    <property type="entry name" value="KH_dom"/>
</dbReference>
<dbReference type="InterPro" id="IPR004088">
    <property type="entry name" value="KH_dom_type_1"/>
</dbReference>
<dbReference type="InterPro" id="IPR036612">
    <property type="entry name" value="KH_dom_type_1_sf"/>
</dbReference>
<dbReference type="InterPro" id="IPR012340">
    <property type="entry name" value="NA-bd_OB-fold"/>
</dbReference>
<dbReference type="InterPro" id="IPR012162">
    <property type="entry name" value="PNPase"/>
</dbReference>
<dbReference type="InterPro" id="IPR027408">
    <property type="entry name" value="PNPase/RNase_PH_dom_sf"/>
</dbReference>
<dbReference type="InterPro" id="IPR015848">
    <property type="entry name" value="PNPase_PH_RNA-bd_bac/org-type"/>
</dbReference>
<dbReference type="InterPro" id="IPR036456">
    <property type="entry name" value="PNPase_PH_RNA-bd_sf"/>
</dbReference>
<dbReference type="InterPro" id="IPR020568">
    <property type="entry name" value="Ribosomal_Su5_D2-typ_SF"/>
</dbReference>
<dbReference type="InterPro" id="IPR003029">
    <property type="entry name" value="S1_domain"/>
</dbReference>
<dbReference type="NCBIfam" id="TIGR03591">
    <property type="entry name" value="polynuc_phos"/>
    <property type="match status" value="1"/>
</dbReference>
<dbReference type="NCBIfam" id="TIGR02696">
    <property type="entry name" value="pppGpp_PNP"/>
    <property type="match status" value="1"/>
</dbReference>
<dbReference type="NCBIfam" id="NF008805">
    <property type="entry name" value="PRK11824.1"/>
    <property type="match status" value="1"/>
</dbReference>
<dbReference type="PANTHER" id="PTHR11252">
    <property type="entry name" value="POLYRIBONUCLEOTIDE NUCLEOTIDYLTRANSFERASE"/>
    <property type="match status" value="1"/>
</dbReference>
<dbReference type="PANTHER" id="PTHR11252:SF0">
    <property type="entry name" value="POLYRIBONUCLEOTIDE NUCLEOTIDYLTRANSFERASE 1, MITOCHONDRIAL"/>
    <property type="match status" value="1"/>
</dbReference>
<dbReference type="Pfam" id="PF00013">
    <property type="entry name" value="KH_1"/>
    <property type="match status" value="1"/>
</dbReference>
<dbReference type="Pfam" id="PF03726">
    <property type="entry name" value="PNPase"/>
    <property type="match status" value="1"/>
</dbReference>
<dbReference type="Pfam" id="PF01138">
    <property type="entry name" value="RNase_PH"/>
    <property type="match status" value="2"/>
</dbReference>
<dbReference type="Pfam" id="PF00575">
    <property type="entry name" value="S1"/>
    <property type="match status" value="1"/>
</dbReference>
<dbReference type="PIRSF" id="PIRSF005499">
    <property type="entry name" value="PNPase"/>
    <property type="match status" value="1"/>
</dbReference>
<dbReference type="SMART" id="SM00322">
    <property type="entry name" value="KH"/>
    <property type="match status" value="1"/>
</dbReference>
<dbReference type="SMART" id="SM00316">
    <property type="entry name" value="S1"/>
    <property type="match status" value="1"/>
</dbReference>
<dbReference type="SUPFAM" id="SSF54791">
    <property type="entry name" value="Eukaryotic type KH-domain (KH-domain type I)"/>
    <property type="match status" value="1"/>
</dbReference>
<dbReference type="SUPFAM" id="SSF50249">
    <property type="entry name" value="Nucleic acid-binding proteins"/>
    <property type="match status" value="1"/>
</dbReference>
<dbReference type="SUPFAM" id="SSF46915">
    <property type="entry name" value="Polynucleotide phosphorylase/guanosine pentaphosphate synthase (PNPase/GPSI), domain 3"/>
    <property type="match status" value="1"/>
</dbReference>
<dbReference type="SUPFAM" id="SSF55666">
    <property type="entry name" value="Ribonuclease PH domain 2-like"/>
    <property type="match status" value="2"/>
</dbReference>
<dbReference type="SUPFAM" id="SSF54211">
    <property type="entry name" value="Ribosomal protein S5 domain 2-like"/>
    <property type="match status" value="2"/>
</dbReference>
<dbReference type="PROSITE" id="PS50084">
    <property type="entry name" value="KH_TYPE_1"/>
    <property type="match status" value="1"/>
</dbReference>
<dbReference type="PROSITE" id="PS50126">
    <property type="entry name" value="S1"/>
    <property type="match status" value="1"/>
</dbReference>
<feature type="chain" id="PRO_1000215655" description="Polyribonucleotide nucleotidyltransferase">
    <location>
        <begin position="1"/>
        <end position="744"/>
    </location>
</feature>
<feature type="domain" description="KH" evidence="1">
    <location>
        <begin position="581"/>
        <end position="640"/>
    </location>
</feature>
<feature type="domain" description="S1 motif" evidence="1">
    <location>
        <begin position="652"/>
        <end position="724"/>
    </location>
</feature>
<feature type="binding site" evidence="1">
    <location>
        <position position="515"/>
    </location>
    <ligand>
        <name>Mg(2+)</name>
        <dbReference type="ChEBI" id="CHEBI:18420"/>
    </ligand>
</feature>
<feature type="binding site" evidence="1">
    <location>
        <position position="521"/>
    </location>
    <ligand>
        <name>Mg(2+)</name>
        <dbReference type="ChEBI" id="CHEBI:18420"/>
    </ligand>
</feature>
<organism>
    <name type="scientific">Beutenbergia cavernae (strain ATCC BAA-8 / DSM 12333 / CCUG 43141 / JCM 11478 / NBRC 16432 / NCIMB 13614 / HKI 0122)</name>
    <dbReference type="NCBI Taxonomy" id="471853"/>
    <lineage>
        <taxon>Bacteria</taxon>
        <taxon>Bacillati</taxon>
        <taxon>Actinomycetota</taxon>
        <taxon>Actinomycetes</taxon>
        <taxon>Micrococcales</taxon>
        <taxon>Beutenbergiaceae</taxon>
        <taxon>Beutenbergia</taxon>
    </lineage>
</organism>
<accession>C5BWR2</accession>
<proteinExistence type="inferred from homology"/>
<reference key="1">
    <citation type="journal article" date="2009" name="Stand. Genomic Sci.">
        <title>Complete genome sequence of Beutenbergia cavernae type strain (HKI 0122).</title>
        <authorList>
            <person name="Land M."/>
            <person name="Pukall R."/>
            <person name="Abt B."/>
            <person name="Goker M."/>
            <person name="Rohde M."/>
            <person name="Glavina Del Rio T."/>
            <person name="Tice H."/>
            <person name="Copeland A."/>
            <person name="Cheng J.F."/>
            <person name="Lucas S."/>
            <person name="Chen F."/>
            <person name="Nolan M."/>
            <person name="Bruce D."/>
            <person name="Goodwin L."/>
            <person name="Pitluck S."/>
            <person name="Ivanova N."/>
            <person name="Mavromatis K."/>
            <person name="Ovchinnikova G."/>
            <person name="Pati A."/>
            <person name="Chen A."/>
            <person name="Palaniappan K."/>
            <person name="Hauser L."/>
            <person name="Chang Y.J."/>
            <person name="Jefferies C.C."/>
            <person name="Saunders E."/>
            <person name="Brettin T."/>
            <person name="Detter J.C."/>
            <person name="Han C."/>
            <person name="Chain P."/>
            <person name="Bristow J."/>
            <person name="Eisen J.A."/>
            <person name="Markowitz V."/>
            <person name="Hugenholtz P."/>
            <person name="Kyrpides N.C."/>
            <person name="Klenk H.P."/>
            <person name="Lapidus A."/>
        </authorList>
    </citation>
    <scope>NUCLEOTIDE SEQUENCE [LARGE SCALE GENOMIC DNA]</scope>
    <source>
        <strain>ATCC BAA-8 / DSM 12333 / CCUG 43141 / JCM 11478 / NBRC 16432 / NCIMB 13614 / HKI 0122</strain>
    </source>
</reference>
<evidence type="ECO:0000255" key="1">
    <source>
        <dbReference type="HAMAP-Rule" id="MF_01595"/>
    </source>
</evidence>
<comment type="function">
    <text evidence="1">Involved in mRNA degradation. Catalyzes the phosphorolysis of single-stranded polyribonucleotides processively in the 3'- to 5'-direction.</text>
</comment>
<comment type="catalytic activity">
    <reaction evidence="1">
        <text>RNA(n+1) + phosphate = RNA(n) + a ribonucleoside 5'-diphosphate</text>
        <dbReference type="Rhea" id="RHEA:22096"/>
        <dbReference type="Rhea" id="RHEA-COMP:14527"/>
        <dbReference type="Rhea" id="RHEA-COMP:17342"/>
        <dbReference type="ChEBI" id="CHEBI:43474"/>
        <dbReference type="ChEBI" id="CHEBI:57930"/>
        <dbReference type="ChEBI" id="CHEBI:140395"/>
        <dbReference type="EC" id="2.7.7.8"/>
    </reaction>
</comment>
<comment type="cofactor">
    <cofactor evidence="1">
        <name>Mg(2+)</name>
        <dbReference type="ChEBI" id="CHEBI:18420"/>
    </cofactor>
</comment>
<comment type="subcellular location">
    <subcellularLocation>
        <location evidence="1">Cytoplasm</location>
    </subcellularLocation>
</comment>
<comment type="similarity">
    <text evidence="1">Belongs to the polyribonucleotide nucleotidyltransferase family.</text>
</comment>